<protein>
    <recommendedName>
        <fullName>Methylisocitrate lyase, mitochondrial</fullName>
        <ecNumber>4.1.3.30</ecNumber>
    </recommendedName>
    <alternativeName>
        <fullName>2-methylisocitrate lyase, mitochondrial</fullName>
    </alternativeName>
</protein>
<feature type="transit peptide" description="Mitochondrion" evidence="5">
    <location>
        <begin position="1"/>
        <end position="40"/>
    </location>
</feature>
<feature type="chain" id="PRO_0000428796" description="Methylisocitrate lyase, mitochondrial">
    <location>
        <begin position="41"/>
        <end position="610"/>
    </location>
</feature>
<feature type="region of interest" description="Disordered" evidence="3">
    <location>
        <begin position="588"/>
        <end position="610"/>
    </location>
</feature>
<feature type="active site" evidence="2">
    <location>
        <position position="273"/>
    </location>
</feature>
<gene>
    <name type="primary">mclA</name>
    <name type="ORF">AN8755</name>
</gene>
<sequence length="610" mass="67596">MLRSIPRRVPRRLPIFTTTATAGGPSRLAQRAFTCGYLRMSPSSLPPVQPPVSSTLPSDSYQLLSTADKAGDAEDALYEQQIKDVEAWWNSPRFEGIKRPYSAADVVSKRGSLQQTYPSSLMARKLFNLLNERAAENKPVHTMGAIDPVQMTQQAPNQEVLYVSGWACSSVLTTTNEVSPDFGDYPYNTVPNQVQRLFKAQQLHDRKHWDARRKMTPEQRKSTPYIDYMRPIIADGDTGHGGLTAVLKLAKLFAENGAAAVHFEDQMHGGKKCGHLAGKVLVPIGEHINRLVATRFQWDMMGVENLVIARTDSESGKLLSSAIDVRDHEFILGVTEESEPLAETLQAMEREGAAPSEIDAFELDWVKRHKLVTFDEAVDAHLEAEGAPQAARDAYKKRVKENPDLSITRRRELANDYTKTPVVWSCDIPRTREGFYHYRAGFPAATKRAKEFGPYADLLWVETGDPNVEKAAKLAGEVRAALPGKKLVYNLSPSFNWMGQGFDEASLKSFIWDLAQHGFVLQLISLAGLHSGATITAELSRAFKDEGMLAYVRLIQAREKELGVDVLTHQKWSGAPYMDGIVGAIQSGSSSSKSMGEGNTEKGEFNPLVF</sequence>
<name>ACEB_EMENI</name>
<organism>
    <name type="scientific">Emericella nidulans (strain FGSC A4 / ATCC 38163 / CBS 112.46 / NRRL 194 / M139)</name>
    <name type="common">Aspergillus nidulans</name>
    <dbReference type="NCBI Taxonomy" id="227321"/>
    <lineage>
        <taxon>Eukaryota</taxon>
        <taxon>Fungi</taxon>
        <taxon>Dikarya</taxon>
        <taxon>Ascomycota</taxon>
        <taxon>Pezizomycotina</taxon>
        <taxon>Eurotiomycetes</taxon>
        <taxon>Eurotiomycetidae</taxon>
        <taxon>Eurotiales</taxon>
        <taxon>Aspergillaceae</taxon>
        <taxon>Aspergillus</taxon>
        <taxon>Aspergillus subgen. Nidulantes</taxon>
    </lineage>
</organism>
<comment type="function">
    <text evidence="4 5">Catalyzes the formation of pyruvate and succinate from 2-methylisocitrate during the metabolism of endogenous propionyl-CoA.</text>
</comment>
<comment type="catalytic activity">
    <reaction evidence="4 5">
        <text>(2S,3R)-3-hydroxybutane-1,2,3-tricarboxylate = pyruvate + succinate</text>
        <dbReference type="Rhea" id="RHEA:16809"/>
        <dbReference type="ChEBI" id="CHEBI:15361"/>
        <dbReference type="ChEBI" id="CHEBI:30031"/>
        <dbReference type="ChEBI" id="CHEBI:57429"/>
        <dbReference type="EC" id="4.1.3.30"/>
    </reaction>
</comment>
<comment type="cofactor">
    <cofactor evidence="4">
        <name>Mg(2+)</name>
        <dbReference type="ChEBI" id="CHEBI:18420"/>
    </cofactor>
</comment>
<comment type="biophysicochemical properties">
    <kinetics>
        <KM evidence="4 5">58 uM for magnesium</KM>
        <KM evidence="4 5">3.33 mM for methylisocitrate</KM>
        <KM evidence="4 5">0.35 mM for isocitrate</KM>
    </kinetics>
</comment>
<comment type="pathway">
    <text>Organic acid metabolism; propanoate degradation.</text>
</comment>
<comment type="subcellular location">
    <subcellularLocation>
        <location evidence="1">Mitochondrion matrix</location>
    </subcellularLocation>
</comment>
<comment type="disruption phenotype">
    <text evidence="5">Impairs growth with propionate as the sole carbon and energy source.</text>
</comment>
<comment type="similarity">
    <text evidence="6">Belongs to the isocitrate lyase/PEP mutase superfamily. Isocitrate lyase family.</text>
</comment>
<proteinExistence type="evidence at protein level"/>
<reference key="1">
    <citation type="journal article" date="2005" name="Nature">
        <title>Sequencing of Aspergillus nidulans and comparative analysis with A. fumigatus and A. oryzae.</title>
        <authorList>
            <person name="Galagan J.E."/>
            <person name="Calvo S.E."/>
            <person name="Cuomo C."/>
            <person name="Ma L.-J."/>
            <person name="Wortman J.R."/>
            <person name="Batzoglou S."/>
            <person name="Lee S.-I."/>
            <person name="Bastuerkmen M."/>
            <person name="Spevak C.C."/>
            <person name="Clutterbuck J."/>
            <person name="Kapitonov V."/>
            <person name="Jurka J."/>
            <person name="Scazzocchio C."/>
            <person name="Farman M.L."/>
            <person name="Butler J."/>
            <person name="Purcell S."/>
            <person name="Harris S."/>
            <person name="Braus G.H."/>
            <person name="Draht O."/>
            <person name="Busch S."/>
            <person name="D'Enfert C."/>
            <person name="Bouchier C."/>
            <person name="Goldman G.H."/>
            <person name="Bell-Pedersen D."/>
            <person name="Griffiths-Jones S."/>
            <person name="Doonan J.H."/>
            <person name="Yu J."/>
            <person name="Vienken K."/>
            <person name="Pain A."/>
            <person name="Freitag M."/>
            <person name="Selker E.U."/>
            <person name="Archer D.B."/>
            <person name="Penalva M.A."/>
            <person name="Oakley B.R."/>
            <person name="Momany M."/>
            <person name="Tanaka T."/>
            <person name="Kumagai T."/>
            <person name="Asai K."/>
            <person name="Machida M."/>
            <person name="Nierman W.C."/>
            <person name="Denning D.W."/>
            <person name="Caddick M.X."/>
            <person name="Hynes M."/>
            <person name="Paoletti M."/>
            <person name="Fischer R."/>
            <person name="Miller B.L."/>
            <person name="Dyer P.S."/>
            <person name="Sachs M.S."/>
            <person name="Osmani S.A."/>
            <person name="Birren B.W."/>
        </authorList>
    </citation>
    <scope>NUCLEOTIDE SEQUENCE [LARGE SCALE GENOMIC DNA]</scope>
    <source>
        <strain>FGSC A4 / ATCC 38163 / CBS 112.46 / NRRL 194 / M139</strain>
    </source>
</reference>
<reference key="2">
    <citation type="journal article" date="2009" name="Fungal Genet. Biol.">
        <title>The 2008 update of the Aspergillus nidulans genome annotation: a community effort.</title>
        <authorList>
            <person name="Wortman J.R."/>
            <person name="Gilsenan J.M."/>
            <person name="Joardar V."/>
            <person name="Deegan J."/>
            <person name="Clutterbuck J."/>
            <person name="Andersen M.R."/>
            <person name="Archer D."/>
            <person name="Bencina M."/>
            <person name="Braus G."/>
            <person name="Coutinho P."/>
            <person name="von Dohren H."/>
            <person name="Doonan J."/>
            <person name="Driessen A.J."/>
            <person name="Durek P."/>
            <person name="Espeso E."/>
            <person name="Fekete E."/>
            <person name="Flipphi M."/>
            <person name="Estrada C.G."/>
            <person name="Geysens S."/>
            <person name="Goldman G."/>
            <person name="de Groot P.W."/>
            <person name="Hansen K."/>
            <person name="Harris S.D."/>
            <person name="Heinekamp T."/>
            <person name="Helmstaedt K."/>
            <person name="Henrissat B."/>
            <person name="Hofmann G."/>
            <person name="Homan T."/>
            <person name="Horio T."/>
            <person name="Horiuchi H."/>
            <person name="James S."/>
            <person name="Jones M."/>
            <person name="Karaffa L."/>
            <person name="Karanyi Z."/>
            <person name="Kato M."/>
            <person name="Keller N."/>
            <person name="Kelly D.E."/>
            <person name="Kiel J.A."/>
            <person name="Kim J.M."/>
            <person name="van der Klei I.J."/>
            <person name="Klis F.M."/>
            <person name="Kovalchuk A."/>
            <person name="Krasevec N."/>
            <person name="Kubicek C.P."/>
            <person name="Liu B."/>
            <person name="Maccabe A."/>
            <person name="Meyer V."/>
            <person name="Mirabito P."/>
            <person name="Miskei M."/>
            <person name="Mos M."/>
            <person name="Mullins J."/>
            <person name="Nelson D.R."/>
            <person name="Nielsen J."/>
            <person name="Oakley B.R."/>
            <person name="Osmani S.A."/>
            <person name="Pakula T."/>
            <person name="Paszewski A."/>
            <person name="Paulsen I."/>
            <person name="Pilsyk S."/>
            <person name="Pocsi I."/>
            <person name="Punt P.J."/>
            <person name="Ram A.F."/>
            <person name="Ren Q."/>
            <person name="Robellet X."/>
            <person name="Robson G."/>
            <person name="Seiboth B."/>
            <person name="van Solingen P."/>
            <person name="Specht T."/>
            <person name="Sun J."/>
            <person name="Taheri-Talesh N."/>
            <person name="Takeshita N."/>
            <person name="Ussery D."/>
            <person name="vanKuyk P.A."/>
            <person name="Visser H."/>
            <person name="van de Vondervoort P.J."/>
            <person name="de Vries R.P."/>
            <person name="Walton J."/>
            <person name="Xiang X."/>
            <person name="Xiong Y."/>
            <person name="Zeng A.P."/>
            <person name="Brandt B.W."/>
            <person name="Cornell M.J."/>
            <person name="van den Hondel C.A."/>
            <person name="Visser J."/>
            <person name="Oliver S.G."/>
            <person name="Turner G."/>
        </authorList>
    </citation>
    <scope>GENOME REANNOTATION</scope>
    <source>
        <strain>FGSC A4 / ATCC 38163 / CBS 112.46 / NRRL 194 / M139</strain>
    </source>
</reference>
<reference key="3">
    <citation type="journal article" date="2005" name="Appl. Environ. Microbiol.">
        <title>Generation and phenotypic characterization of Aspergillus nidulans methylisocitrate lyase deletion mutants: methylisocitrate inhibits growth and conidiation.</title>
        <authorList>
            <person name="Brock M."/>
        </authorList>
    </citation>
    <scope>PROTEIN SEQUENCE OF 41-51</scope>
    <scope>FUNCTION</scope>
    <scope>DISRUPTION PHENOTYPE</scope>
    <scope>CATALYTIC ACTIVITY</scope>
    <scope>BIOPHYSICOCHEMICAL PROPERTIES</scope>
</reference>
<reference key="4">
    <citation type="journal article" date="2001" name="Eur. J. Biochem.">
        <title>2-Methylisocitrate lyases from the bacterium Escherichia coli and the filamentous fungus Aspergillus nidulans: characterization and comparison of both enzymes.</title>
        <authorList>
            <person name="Brock M."/>
            <person name="Darley D."/>
            <person name="Textor S."/>
            <person name="Buckel W."/>
        </authorList>
    </citation>
    <scope>FUNCTION</scope>
    <scope>CATALYTIC ACTIVITY</scope>
    <scope>BIOPHYSICOCHEMICAL PROPERTIES</scope>
    <scope>COFACTOR</scope>
</reference>
<dbReference type="EC" id="4.1.3.30"/>
<dbReference type="EMBL" id="BN001303">
    <property type="protein sequence ID" value="CBF78090.1"/>
    <property type="molecule type" value="Genomic_DNA"/>
</dbReference>
<dbReference type="RefSeq" id="XP_682024.1">
    <property type="nucleotide sequence ID" value="XM_676932.1"/>
</dbReference>
<dbReference type="SMR" id="C8V9Y5"/>
<dbReference type="FunCoup" id="C8V9Y5">
    <property type="interactions" value="105"/>
</dbReference>
<dbReference type="STRING" id="227321.C8V9Y5"/>
<dbReference type="EnsemblFungi" id="CBF78090">
    <property type="protein sequence ID" value="CBF78090"/>
    <property type="gene ID" value="ANIA_08755"/>
</dbReference>
<dbReference type="KEGG" id="ani:ANIA_08755"/>
<dbReference type="eggNOG" id="KOG1260">
    <property type="taxonomic scope" value="Eukaryota"/>
</dbReference>
<dbReference type="HOGENOM" id="CLU_019214_2_2_1"/>
<dbReference type="InParanoid" id="C8V9Y5"/>
<dbReference type="OMA" id="TVPHADF"/>
<dbReference type="OrthoDB" id="4078635at2759"/>
<dbReference type="SABIO-RK" id="C8V9Y5"/>
<dbReference type="UniPathway" id="UPA00946"/>
<dbReference type="Proteomes" id="UP000000560">
    <property type="component" value="Chromosome III"/>
</dbReference>
<dbReference type="GO" id="GO:0005759">
    <property type="term" value="C:mitochondrial matrix"/>
    <property type="evidence" value="ECO:0000318"/>
    <property type="project" value="GO_Central"/>
</dbReference>
<dbReference type="GO" id="GO:0004451">
    <property type="term" value="F:isocitrate lyase activity"/>
    <property type="evidence" value="ECO:0007669"/>
    <property type="project" value="InterPro"/>
</dbReference>
<dbReference type="GO" id="GO:0046421">
    <property type="term" value="F:methylisocitrate lyase activity"/>
    <property type="evidence" value="ECO:0000318"/>
    <property type="project" value="GO_Central"/>
</dbReference>
<dbReference type="GO" id="GO:0019629">
    <property type="term" value="P:propionate catabolic process, 2-methylcitrate cycle"/>
    <property type="evidence" value="ECO:0000318"/>
    <property type="project" value="GO_Central"/>
</dbReference>
<dbReference type="CDD" id="cd00377">
    <property type="entry name" value="ICL_PEPM"/>
    <property type="match status" value="1"/>
</dbReference>
<dbReference type="FunFam" id="1.10.10.850:FF:000001">
    <property type="entry name" value="Isocitrate lyase"/>
    <property type="match status" value="1"/>
</dbReference>
<dbReference type="Gene3D" id="1.10.10.850">
    <property type="match status" value="1"/>
</dbReference>
<dbReference type="Gene3D" id="3.20.20.60">
    <property type="entry name" value="Phosphoenolpyruvate-binding domains"/>
    <property type="match status" value="1"/>
</dbReference>
<dbReference type="InterPro" id="IPR039556">
    <property type="entry name" value="ICL/PEPM"/>
</dbReference>
<dbReference type="InterPro" id="IPR006254">
    <property type="entry name" value="Isocitrate_lyase"/>
</dbReference>
<dbReference type="InterPro" id="IPR018523">
    <property type="entry name" value="Isocitrate_lyase_ph_CS"/>
</dbReference>
<dbReference type="InterPro" id="IPR015813">
    <property type="entry name" value="Pyrv/PenolPyrv_kinase-like_dom"/>
</dbReference>
<dbReference type="InterPro" id="IPR040442">
    <property type="entry name" value="Pyrv_kinase-like_dom_sf"/>
</dbReference>
<dbReference type="NCBIfam" id="TIGR01346">
    <property type="entry name" value="isocit_lyase"/>
    <property type="match status" value="1"/>
</dbReference>
<dbReference type="PANTHER" id="PTHR21631">
    <property type="entry name" value="ISOCITRATE LYASE/MALATE SYNTHASE"/>
    <property type="match status" value="1"/>
</dbReference>
<dbReference type="PANTHER" id="PTHR21631:SF13">
    <property type="entry name" value="MITOCHONDRIAL 2-METHYLISOCITRATE LYASE ICL2"/>
    <property type="match status" value="1"/>
</dbReference>
<dbReference type="Pfam" id="PF00463">
    <property type="entry name" value="ICL"/>
    <property type="match status" value="1"/>
</dbReference>
<dbReference type="PIRSF" id="PIRSF001362">
    <property type="entry name" value="Isocit_lyase"/>
    <property type="match status" value="1"/>
</dbReference>
<dbReference type="SUPFAM" id="SSF51621">
    <property type="entry name" value="Phosphoenolpyruvate/pyruvate domain"/>
    <property type="match status" value="1"/>
</dbReference>
<dbReference type="PROSITE" id="PS00161">
    <property type="entry name" value="ISOCITRATE_LYASE"/>
    <property type="match status" value="1"/>
</dbReference>
<evidence type="ECO:0000250" key="1"/>
<evidence type="ECO:0000255" key="2">
    <source>
        <dbReference type="PROSITE-ProRule" id="PRU10119"/>
    </source>
</evidence>
<evidence type="ECO:0000256" key="3">
    <source>
        <dbReference type="SAM" id="MobiDB-lite"/>
    </source>
</evidence>
<evidence type="ECO:0000269" key="4">
    <source>
    </source>
</evidence>
<evidence type="ECO:0000269" key="5">
    <source>
    </source>
</evidence>
<evidence type="ECO:0000305" key="6"/>
<accession>C8V9Y5</accession>
<keyword id="KW-0903">Direct protein sequencing</keyword>
<keyword id="KW-0456">Lyase</keyword>
<keyword id="KW-0496">Mitochondrion</keyword>
<keyword id="KW-1185">Reference proteome</keyword>
<keyword id="KW-0809">Transit peptide</keyword>